<comment type="function">
    <text evidence="1">One of the primary rRNA binding proteins, it binds directly to 16S rRNA central domain where it helps coordinate assembly of the platform of the 30S subunit.</text>
</comment>
<comment type="subunit">
    <text evidence="1">Part of the 30S ribosomal subunit. Contacts proteins S5 and S12.</text>
</comment>
<comment type="similarity">
    <text evidence="1">Belongs to the universal ribosomal protein uS8 family.</text>
</comment>
<proteinExistence type="inferred from homology"/>
<organism>
    <name type="scientific">Buchnera aphidicola subsp. Acyrthosiphon pisum (strain 5A)</name>
    <dbReference type="NCBI Taxonomy" id="563178"/>
    <lineage>
        <taxon>Bacteria</taxon>
        <taxon>Pseudomonadati</taxon>
        <taxon>Pseudomonadota</taxon>
        <taxon>Gammaproteobacteria</taxon>
        <taxon>Enterobacterales</taxon>
        <taxon>Erwiniaceae</taxon>
        <taxon>Buchnera</taxon>
    </lineage>
</organism>
<dbReference type="EMBL" id="CP001161">
    <property type="protein sequence ID" value="ACL30854.1"/>
    <property type="molecule type" value="Genomic_DNA"/>
</dbReference>
<dbReference type="RefSeq" id="WP_009874461.1">
    <property type="nucleotide sequence ID" value="NC_011833.1"/>
</dbReference>
<dbReference type="SMR" id="B8D9T3"/>
<dbReference type="KEGG" id="bap:BUAP5A_503"/>
<dbReference type="HOGENOM" id="CLU_098428_0_0_6"/>
<dbReference type="OrthoDB" id="9802617at2"/>
<dbReference type="Proteomes" id="UP000006904">
    <property type="component" value="Chromosome"/>
</dbReference>
<dbReference type="GO" id="GO:1990904">
    <property type="term" value="C:ribonucleoprotein complex"/>
    <property type="evidence" value="ECO:0007669"/>
    <property type="project" value="UniProtKB-KW"/>
</dbReference>
<dbReference type="GO" id="GO:0005840">
    <property type="term" value="C:ribosome"/>
    <property type="evidence" value="ECO:0007669"/>
    <property type="project" value="UniProtKB-KW"/>
</dbReference>
<dbReference type="GO" id="GO:0019843">
    <property type="term" value="F:rRNA binding"/>
    <property type="evidence" value="ECO:0007669"/>
    <property type="project" value="UniProtKB-UniRule"/>
</dbReference>
<dbReference type="GO" id="GO:0003735">
    <property type="term" value="F:structural constituent of ribosome"/>
    <property type="evidence" value="ECO:0007669"/>
    <property type="project" value="InterPro"/>
</dbReference>
<dbReference type="GO" id="GO:0006412">
    <property type="term" value="P:translation"/>
    <property type="evidence" value="ECO:0007669"/>
    <property type="project" value="UniProtKB-UniRule"/>
</dbReference>
<dbReference type="FunFam" id="3.30.1370.30:FF:000003">
    <property type="entry name" value="30S ribosomal protein S8"/>
    <property type="match status" value="1"/>
</dbReference>
<dbReference type="FunFam" id="3.30.1490.10:FF:000001">
    <property type="entry name" value="30S ribosomal protein S8"/>
    <property type="match status" value="1"/>
</dbReference>
<dbReference type="Gene3D" id="3.30.1370.30">
    <property type="match status" value="1"/>
</dbReference>
<dbReference type="Gene3D" id="3.30.1490.10">
    <property type="match status" value="1"/>
</dbReference>
<dbReference type="HAMAP" id="MF_01302_B">
    <property type="entry name" value="Ribosomal_uS8_B"/>
    <property type="match status" value="1"/>
</dbReference>
<dbReference type="InterPro" id="IPR000630">
    <property type="entry name" value="Ribosomal_uS8"/>
</dbReference>
<dbReference type="InterPro" id="IPR047863">
    <property type="entry name" value="Ribosomal_uS8_CS"/>
</dbReference>
<dbReference type="InterPro" id="IPR035987">
    <property type="entry name" value="Ribosomal_uS8_sf"/>
</dbReference>
<dbReference type="NCBIfam" id="NF001109">
    <property type="entry name" value="PRK00136.1"/>
    <property type="match status" value="1"/>
</dbReference>
<dbReference type="PANTHER" id="PTHR11758">
    <property type="entry name" value="40S RIBOSOMAL PROTEIN S15A"/>
    <property type="match status" value="1"/>
</dbReference>
<dbReference type="Pfam" id="PF00410">
    <property type="entry name" value="Ribosomal_S8"/>
    <property type="match status" value="1"/>
</dbReference>
<dbReference type="SUPFAM" id="SSF56047">
    <property type="entry name" value="Ribosomal protein S8"/>
    <property type="match status" value="1"/>
</dbReference>
<dbReference type="PROSITE" id="PS00053">
    <property type="entry name" value="RIBOSOMAL_S8"/>
    <property type="match status" value="1"/>
</dbReference>
<reference key="1">
    <citation type="journal article" date="2009" name="Science">
        <title>The dynamics and time scale of ongoing genomic erosion in symbiotic bacteria.</title>
        <authorList>
            <person name="Moran N.A."/>
            <person name="McLaughlin H.J."/>
            <person name="Sorek R."/>
        </authorList>
    </citation>
    <scope>NUCLEOTIDE SEQUENCE [LARGE SCALE GENOMIC DNA]</scope>
    <source>
        <strain>5A</strain>
    </source>
</reference>
<evidence type="ECO:0000255" key="1">
    <source>
        <dbReference type="HAMAP-Rule" id="MF_01302"/>
    </source>
</evidence>
<evidence type="ECO:0000305" key="2"/>
<name>RS8_BUCA5</name>
<feature type="chain" id="PRO_1000165313" description="Small ribosomal subunit protein uS8">
    <location>
        <begin position="1"/>
        <end position="130"/>
    </location>
</feature>
<gene>
    <name evidence="1" type="primary">rpsH</name>
    <name type="ordered locus">BUAP5A_503</name>
</gene>
<sequence length="130" mass="14608">MSMQDPVADMLTRIRNGQLANKYSVKMPSSKLKKSIIQLLKEEGYIKDYNVTGDTKLELEVFLKYFQGKSVVDMIQRISRPSLRIYKNKNNLPKVMSGLGIAVISTSKGVMTDRMARQEGLGGEVICYVA</sequence>
<accession>B8D9T3</accession>
<keyword id="KW-0687">Ribonucleoprotein</keyword>
<keyword id="KW-0689">Ribosomal protein</keyword>
<keyword id="KW-0694">RNA-binding</keyword>
<keyword id="KW-0699">rRNA-binding</keyword>
<protein>
    <recommendedName>
        <fullName evidence="1">Small ribosomal subunit protein uS8</fullName>
    </recommendedName>
    <alternativeName>
        <fullName evidence="2">30S ribosomal protein S8</fullName>
    </alternativeName>
</protein>